<name>ALR_VARPS</name>
<organism>
    <name type="scientific">Variovorax paradoxus (strain S110)</name>
    <dbReference type="NCBI Taxonomy" id="543728"/>
    <lineage>
        <taxon>Bacteria</taxon>
        <taxon>Pseudomonadati</taxon>
        <taxon>Pseudomonadota</taxon>
        <taxon>Betaproteobacteria</taxon>
        <taxon>Burkholderiales</taxon>
        <taxon>Comamonadaceae</taxon>
        <taxon>Variovorax</taxon>
    </lineage>
</organism>
<proteinExistence type="inferred from homology"/>
<comment type="function">
    <text evidence="1">Catalyzes the interconversion of L-alanine and D-alanine. May also act on other amino acids.</text>
</comment>
<comment type="catalytic activity">
    <reaction evidence="1">
        <text>L-alanine = D-alanine</text>
        <dbReference type="Rhea" id="RHEA:20249"/>
        <dbReference type="ChEBI" id="CHEBI:57416"/>
        <dbReference type="ChEBI" id="CHEBI:57972"/>
        <dbReference type="EC" id="5.1.1.1"/>
    </reaction>
</comment>
<comment type="cofactor">
    <cofactor evidence="1">
        <name>pyridoxal 5'-phosphate</name>
        <dbReference type="ChEBI" id="CHEBI:597326"/>
    </cofactor>
</comment>
<comment type="pathway">
    <text evidence="1">Amino-acid biosynthesis; D-alanine biosynthesis; D-alanine from L-alanine: step 1/1.</text>
</comment>
<comment type="similarity">
    <text evidence="1">Belongs to the alanine racemase family.</text>
</comment>
<reference key="1">
    <citation type="journal article" date="2011" name="J. Bacteriol.">
        <title>Complete genome sequence of the metabolically versatile plant growth-promoting endophyte, Variovorax paradoxus S110.</title>
        <authorList>
            <person name="Han J.I."/>
            <person name="Choi H.K."/>
            <person name="Lee S.W."/>
            <person name="Orwin P.M."/>
            <person name="Kim J."/>
            <person name="Laroe S.L."/>
            <person name="Kim T.G."/>
            <person name="O'Neil J."/>
            <person name="Leadbetter J.R."/>
            <person name="Lee S.Y."/>
            <person name="Hur C.G."/>
            <person name="Spain J.C."/>
            <person name="Ovchinnikova G."/>
            <person name="Goodwin L."/>
            <person name="Han C."/>
        </authorList>
    </citation>
    <scope>NUCLEOTIDE SEQUENCE [LARGE SCALE GENOMIC DNA]</scope>
    <source>
        <strain>S110</strain>
    </source>
</reference>
<gene>
    <name type="primary">alr</name>
    <name type="ordered locus">Vapar_0229</name>
</gene>
<dbReference type="EC" id="5.1.1.1" evidence="1"/>
<dbReference type="EMBL" id="CP001635">
    <property type="protein sequence ID" value="ACS16892.1"/>
    <property type="molecule type" value="Genomic_DNA"/>
</dbReference>
<dbReference type="SMR" id="C5CX88"/>
<dbReference type="STRING" id="543728.Vapar_0229"/>
<dbReference type="KEGG" id="vap:Vapar_0229"/>
<dbReference type="eggNOG" id="COG0787">
    <property type="taxonomic scope" value="Bacteria"/>
</dbReference>
<dbReference type="HOGENOM" id="CLU_028393_1_0_4"/>
<dbReference type="OrthoDB" id="9813814at2"/>
<dbReference type="UniPathway" id="UPA00042">
    <property type="reaction ID" value="UER00497"/>
</dbReference>
<dbReference type="GO" id="GO:0005829">
    <property type="term" value="C:cytosol"/>
    <property type="evidence" value="ECO:0007669"/>
    <property type="project" value="TreeGrafter"/>
</dbReference>
<dbReference type="GO" id="GO:0008784">
    <property type="term" value="F:alanine racemase activity"/>
    <property type="evidence" value="ECO:0007669"/>
    <property type="project" value="UniProtKB-UniRule"/>
</dbReference>
<dbReference type="GO" id="GO:0030170">
    <property type="term" value="F:pyridoxal phosphate binding"/>
    <property type="evidence" value="ECO:0007669"/>
    <property type="project" value="UniProtKB-UniRule"/>
</dbReference>
<dbReference type="GO" id="GO:0030632">
    <property type="term" value="P:D-alanine biosynthetic process"/>
    <property type="evidence" value="ECO:0007669"/>
    <property type="project" value="UniProtKB-UniRule"/>
</dbReference>
<dbReference type="CDD" id="cd06827">
    <property type="entry name" value="PLPDE_III_AR_proteobact"/>
    <property type="match status" value="1"/>
</dbReference>
<dbReference type="FunFam" id="3.20.20.10:FF:000002">
    <property type="entry name" value="Alanine racemase"/>
    <property type="match status" value="1"/>
</dbReference>
<dbReference type="Gene3D" id="3.20.20.10">
    <property type="entry name" value="Alanine racemase"/>
    <property type="match status" value="1"/>
</dbReference>
<dbReference type="Gene3D" id="2.40.37.10">
    <property type="entry name" value="Lyase, Ornithine Decarboxylase, Chain A, domain 1"/>
    <property type="match status" value="1"/>
</dbReference>
<dbReference type="HAMAP" id="MF_01201">
    <property type="entry name" value="Ala_racemase"/>
    <property type="match status" value="1"/>
</dbReference>
<dbReference type="InterPro" id="IPR000821">
    <property type="entry name" value="Ala_racemase"/>
</dbReference>
<dbReference type="InterPro" id="IPR009006">
    <property type="entry name" value="Ala_racemase/Decarboxylase_C"/>
</dbReference>
<dbReference type="InterPro" id="IPR011079">
    <property type="entry name" value="Ala_racemase_C"/>
</dbReference>
<dbReference type="InterPro" id="IPR001608">
    <property type="entry name" value="Ala_racemase_N"/>
</dbReference>
<dbReference type="InterPro" id="IPR020622">
    <property type="entry name" value="Ala_racemase_pyridoxalP-BS"/>
</dbReference>
<dbReference type="InterPro" id="IPR029066">
    <property type="entry name" value="PLP-binding_barrel"/>
</dbReference>
<dbReference type="NCBIfam" id="TIGR00492">
    <property type="entry name" value="alr"/>
    <property type="match status" value="1"/>
</dbReference>
<dbReference type="PANTHER" id="PTHR30511">
    <property type="entry name" value="ALANINE RACEMASE"/>
    <property type="match status" value="1"/>
</dbReference>
<dbReference type="PANTHER" id="PTHR30511:SF0">
    <property type="entry name" value="ALANINE RACEMASE, CATABOLIC-RELATED"/>
    <property type="match status" value="1"/>
</dbReference>
<dbReference type="Pfam" id="PF00842">
    <property type="entry name" value="Ala_racemase_C"/>
    <property type="match status" value="1"/>
</dbReference>
<dbReference type="Pfam" id="PF01168">
    <property type="entry name" value="Ala_racemase_N"/>
    <property type="match status" value="1"/>
</dbReference>
<dbReference type="PRINTS" id="PR00992">
    <property type="entry name" value="ALARACEMASE"/>
</dbReference>
<dbReference type="SMART" id="SM01005">
    <property type="entry name" value="Ala_racemase_C"/>
    <property type="match status" value="1"/>
</dbReference>
<dbReference type="SUPFAM" id="SSF50621">
    <property type="entry name" value="Alanine racemase C-terminal domain-like"/>
    <property type="match status" value="1"/>
</dbReference>
<dbReference type="SUPFAM" id="SSF51419">
    <property type="entry name" value="PLP-binding barrel"/>
    <property type="match status" value="1"/>
</dbReference>
<dbReference type="PROSITE" id="PS00395">
    <property type="entry name" value="ALANINE_RACEMASE"/>
    <property type="match status" value="1"/>
</dbReference>
<accession>C5CX88</accession>
<protein>
    <recommendedName>
        <fullName evidence="1">Alanine racemase</fullName>
        <ecNumber evidence="1">5.1.1.1</ecNumber>
    </recommendedName>
</protein>
<evidence type="ECO:0000255" key="1">
    <source>
        <dbReference type="HAMAP-Rule" id="MF_01201"/>
    </source>
</evidence>
<sequence length="366" mass="39753">MPRPILATVHTAALRHNLDRARRAAVDARVWAVVKANAYGHGIERVYEGLRGADGFALLDLAEAERVRALGWRGPVLLLEGVFDARDLELCSRLDLWHTVHCDEQIDMLAAHKTLKPQRVFLKMNSGMNRLGFAPERFGSAWTRLNALPQVDEISLMTHFSDADGARGIAHQLEVFERATHDLLGERSIANSAATLRHARQTRGDWVRPGIVLYGSAPDFPEHDAAHWQLQPTMTLSTKLIGIQTLKAGDTIGYGSNFTAEGPLTIGVAAVGYADGYPRHCNTGTPVLVNGVRTRMVGRVSMDMITVDLTPVPEAKFGTEVTLWGRSAVSGAVLPIDEVAQAAGTVGYELMCAVAPRVPFAPADGE</sequence>
<feature type="chain" id="PRO_1000213844" description="Alanine racemase">
    <location>
        <begin position="1"/>
        <end position="366"/>
    </location>
</feature>
<feature type="active site" description="Proton acceptor; specific for D-alanine" evidence="1">
    <location>
        <position position="35"/>
    </location>
</feature>
<feature type="active site" description="Proton acceptor; specific for L-alanine" evidence="1">
    <location>
        <position position="254"/>
    </location>
</feature>
<feature type="binding site" evidence="1">
    <location>
        <position position="130"/>
    </location>
    <ligand>
        <name>substrate</name>
    </ligand>
</feature>
<feature type="binding site" evidence="1">
    <location>
        <position position="302"/>
    </location>
    <ligand>
        <name>substrate</name>
    </ligand>
</feature>
<feature type="modified residue" description="N6-(pyridoxal phosphate)lysine" evidence="1">
    <location>
        <position position="35"/>
    </location>
</feature>
<keyword id="KW-0413">Isomerase</keyword>
<keyword id="KW-0663">Pyridoxal phosphate</keyword>